<gene>
    <name evidence="1" type="primary">thiI</name>
    <name type="ordered locus">MPN_550</name>
    <name type="ORF">MP292</name>
</gene>
<feature type="chain" id="PRO_0000154851" description="Probable tRNA sulfurtransferase">
    <location>
        <begin position="1"/>
        <end position="387"/>
    </location>
</feature>
<feature type="domain" description="THUMP" evidence="1">
    <location>
        <begin position="67"/>
        <end position="167"/>
    </location>
</feature>
<feature type="binding site" evidence="1">
    <location>
        <begin position="185"/>
        <end position="186"/>
    </location>
    <ligand>
        <name>ATP</name>
        <dbReference type="ChEBI" id="CHEBI:30616"/>
    </ligand>
</feature>
<feature type="binding site" evidence="1">
    <location>
        <begin position="210"/>
        <end position="211"/>
    </location>
    <ligand>
        <name>ATP</name>
        <dbReference type="ChEBI" id="CHEBI:30616"/>
    </ligand>
</feature>
<feature type="binding site" evidence="1">
    <location>
        <position position="269"/>
    </location>
    <ligand>
        <name>ATP</name>
        <dbReference type="ChEBI" id="CHEBI:30616"/>
    </ligand>
</feature>
<feature type="binding site" evidence="1">
    <location>
        <position position="287"/>
    </location>
    <ligand>
        <name>ATP</name>
        <dbReference type="ChEBI" id="CHEBI:30616"/>
    </ligand>
</feature>
<feature type="binding site" evidence="1">
    <location>
        <position position="296"/>
    </location>
    <ligand>
        <name>ATP</name>
        <dbReference type="ChEBI" id="CHEBI:30616"/>
    </ligand>
</feature>
<accession>P75228</accession>
<dbReference type="EC" id="2.8.1.4" evidence="1"/>
<dbReference type="EMBL" id="U00089">
    <property type="protein sequence ID" value="AAB95940.1"/>
    <property type="molecule type" value="Genomic_DNA"/>
</dbReference>
<dbReference type="PIR" id="S73618">
    <property type="entry name" value="S73618"/>
</dbReference>
<dbReference type="RefSeq" id="NP_110239.1">
    <property type="nucleotide sequence ID" value="NC_000912.1"/>
</dbReference>
<dbReference type="RefSeq" id="WP_010874907.1">
    <property type="nucleotide sequence ID" value="NZ_OU342337.1"/>
</dbReference>
<dbReference type="SMR" id="P75228"/>
<dbReference type="STRING" id="272634.MPN_550"/>
<dbReference type="EnsemblBacteria" id="AAB95940">
    <property type="protein sequence ID" value="AAB95940"/>
    <property type="gene ID" value="MPN_550"/>
</dbReference>
<dbReference type="GeneID" id="66608768"/>
<dbReference type="KEGG" id="mpn:MPN_550"/>
<dbReference type="PATRIC" id="fig|272634.6.peg.612"/>
<dbReference type="HOGENOM" id="CLU_037952_4_0_14"/>
<dbReference type="OrthoDB" id="9773948at2"/>
<dbReference type="BioCyc" id="MPNE272634:G1GJ3-905-MONOMER"/>
<dbReference type="UniPathway" id="UPA00060"/>
<dbReference type="Proteomes" id="UP000000808">
    <property type="component" value="Chromosome"/>
</dbReference>
<dbReference type="GO" id="GO:0005829">
    <property type="term" value="C:cytosol"/>
    <property type="evidence" value="ECO:0007669"/>
    <property type="project" value="TreeGrafter"/>
</dbReference>
<dbReference type="GO" id="GO:0005524">
    <property type="term" value="F:ATP binding"/>
    <property type="evidence" value="ECO:0007669"/>
    <property type="project" value="UniProtKB-UniRule"/>
</dbReference>
<dbReference type="GO" id="GO:0004810">
    <property type="term" value="F:CCA tRNA nucleotidyltransferase activity"/>
    <property type="evidence" value="ECO:0007669"/>
    <property type="project" value="InterPro"/>
</dbReference>
<dbReference type="GO" id="GO:0000049">
    <property type="term" value="F:tRNA binding"/>
    <property type="evidence" value="ECO:0007669"/>
    <property type="project" value="UniProtKB-UniRule"/>
</dbReference>
<dbReference type="GO" id="GO:0140741">
    <property type="term" value="F:tRNA-uracil-4 sulfurtransferase activity"/>
    <property type="evidence" value="ECO:0007669"/>
    <property type="project" value="UniProtKB-EC"/>
</dbReference>
<dbReference type="GO" id="GO:0009228">
    <property type="term" value="P:thiamine biosynthetic process"/>
    <property type="evidence" value="ECO:0007669"/>
    <property type="project" value="UniProtKB-KW"/>
</dbReference>
<dbReference type="GO" id="GO:0009229">
    <property type="term" value="P:thiamine diphosphate biosynthetic process"/>
    <property type="evidence" value="ECO:0007669"/>
    <property type="project" value="UniProtKB-UniRule"/>
</dbReference>
<dbReference type="GO" id="GO:0052837">
    <property type="term" value="P:thiazole biosynthetic process"/>
    <property type="evidence" value="ECO:0007669"/>
    <property type="project" value="TreeGrafter"/>
</dbReference>
<dbReference type="GO" id="GO:0002937">
    <property type="term" value="P:tRNA 4-thiouridine biosynthesis"/>
    <property type="evidence" value="ECO:0007669"/>
    <property type="project" value="TreeGrafter"/>
</dbReference>
<dbReference type="CDD" id="cd01712">
    <property type="entry name" value="PPase_ThiI"/>
    <property type="match status" value="1"/>
</dbReference>
<dbReference type="CDD" id="cd11716">
    <property type="entry name" value="THUMP_ThiI"/>
    <property type="match status" value="1"/>
</dbReference>
<dbReference type="Gene3D" id="3.30.2130.30">
    <property type="match status" value="1"/>
</dbReference>
<dbReference type="Gene3D" id="3.40.50.620">
    <property type="entry name" value="HUPs"/>
    <property type="match status" value="1"/>
</dbReference>
<dbReference type="HAMAP" id="MF_00021">
    <property type="entry name" value="ThiI"/>
    <property type="match status" value="1"/>
</dbReference>
<dbReference type="InterPro" id="IPR014729">
    <property type="entry name" value="Rossmann-like_a/b/a_fold"/>
</dbReference>
<dbReference type="InterPro" id="IPR020536">
    <property type="entry name" value="ThiI_AANH"/>
</dbReference>
<dbReference type="InterPro" id="IPR054173">
    <property type="entry name" value="ThiI_fer"/>
</dbReference>
<dbReference type="InterPro" id="IPR049961">
    <property type="entry name" value="ThiI_N"/>
</dbReference>
<dbReference type="InterPro" id="IPR004114">
    <property type="entry name" value="THUMP_dom"/>
</dbReference>
<dbReference type="InterPro" id="IPR049962">
    <property type="entry name" value="THUMP_ThiI"/>
</dbReference>
<dbReference type="InterPro" id="IPR003720">
    <property type="entry name" value="tRNA_STrfase"/>
</dbReference>
<dbReference type="InterPro" id="IPR050102">
    <property type="entry name" value="tRNA_sulfurtransferase_ThiI"/>
</dbReference>
<dbReference type="NCBIfam" id="TIGR00342">
    <property type="entry name" value="tRNA uracil 4-sulfurtransferase ThiI"/>
    <property type="match status" value="1"/>
</dbReference>
<dbReference type="PANTHER" id="PTHR43209">
    <property type="entry name" value="TRNA SULFURTRANSFERASE"/>
    <property type="match status" value="1"/>
</dbReference>
<dbReference type="PANTHER" id="PTHR43209:SF1">
    <property type="entry name" value="TRNA SULFURTRANSFERASE"/>
    <property type="match status" value="1"/>
</dbReference>
<dbReference type="Pfam" id="PF02568">
    <property type="entry name" value="ThiI"/>
    <property type="match status" value="1"/>
</dbReference>
<dbReference type="Pfam" id="PF22025">
    <property type="entry name" value="ThiI_fer"/>
    <property type="match status" value="1"/>
</dbReference>
<dbReference type="Pfam" id="PF02926">
    <property type="entry name" value="THUMP"/>
    <property type="match status" value="1"/>
</dbReference>
<dbReference type="SMART" id="SM00981">
    <property type="entry name" value="THUMP"/>
    <property type="match status" value="1"/>
</dbReference>
<dbReference type="SUPFAM" id="SSF52402">
    <property type="entry name" value="Adenine nucleotide alpha hydrolases-like"/>
    <property type="match status" value="1"/>
</dbReference>
<dbReference type="SUPFAM" id="SSF143437">
    <property type="entry name" value="THUMP domain-like"/>
    <property type="match status" value="1"/>
</dbReference>
<dbReference type="PROSITE" id="PS51165">
    <property type="entry name" value="THUMP"/>
    <property type="match status" value="1"/>
</dbReference>
<name>THII_MYCPN</name>
<protein>
    <recommendedName>
        <fullName evidence="1">Probable tRNA sulfurtransferase</fullName>
        <ecNumber evidence="1">2.8.1.4</ecNumber>
    </recommendedName>
    <alternativeName>
        <fullName evidence="1">Sulfur carrier protein ThiS sulfurtransferase</fullName>
    </alternativeName>
    <alternativeName>
        <fullName evidence="1">Thiamine biosynthesis protein ThiI</fullName>
    </alternativeName>
    <alternativeName>
        <fullName evidence="1">tRNA 4-thiouridine synthase</fullName>
    </alternativeName>
</protein>
<reference key="1">
    <citation type="journal article" date="1996" name="Nucleic Acids Res.">
        <title>Complete sequence analysis of the genome of the bacterium Mycoplasma pneumoniae.</title>
        <authorList>
            <person name="Himmelreich R."/>
            <person name="Hilbert H."/>
            <person name="Plagens H."/>
            <person name="Pirkl E."/>
            <person name="Li B.-C."/>
            <person name="Herrmann R."/>
        </authorList>
    </citation>
    <scope>NUCLEOTIDE SEQUENCE [LARGE SCALE GENOMIC DNA]</scope>
    <source>
        <strain>ATCC 29342 / M129 / Subtype 1</strain>
    </source>
</reference>
<proteinExistence type="inferred from homology"/>
<evidence type="ECO:0000255" key="1">
    <source>
        <dbReference type="HAMAP-Rule" id="MF_00021"/>
    </source>
</evidence>
<keyword id="KW-0067">ATP-binding</keyword>
<keyword id="KW-0963">Cytoplasm</keyword>
<keyword id="KW-0547">Nucleotide-binding</keyword>
<keyword id="KW-1185">Reference proteome</keyword>
<keyword id="KW-0694">RNA-binding</keyword>
<keyword id="KW-0784">Thiamine biosynthesis</keyword>
<keyword id="KW-0808">Transferase</keyword>
<keyword id="KW-0820">tRNA-binding</keyword>
<comment type="function">
    <text evidence="1">Catalyzes the ATP-dependent transfer of a sulfur to tRNA to produce 4-thiouridine in position 8 of tRNAs, which functions as a near-UV photosensor. Also catalyzes the transfer of sulfur to the sulfur carrier protein ThiS, forming ThiS-thiocarboxylate. This is a step in the synthesis of thiazole, in the thiamine biosynthesis pathway. The sulfur is donated as persulfide by IscS.</text>
</comment>
<comment type="catalytic activity">
    <reaction evidence="1">
        <text>[ThiI sulfur-carrier protein]-S-sulfanyl-L-cysteine + a uridine in tRNA + 2 reduced [2Fe-2S]-[ferredoxin] + ATP + H(+) = [ThiI sulfur-carrier protein]-L-cysteine + a 4-thiouridine in tRNA + 2 oxidized [2Fe-2S]-[ferredoxin] + AMP + diphosphate</text>
        <dbReference type="Rhea" id="RHEA:24176"/>
        <dbReference type="Rhea" id="RHEA-COMP:10000"/>
        <dbReference type="Rhea" id="RHEA-COMP:10001"/>
        <dbReference type="Rhea" id="RHEA-COMP:13337"/>
        <dbReference type="Rhea" id="RHEA-COMP:13338"/>
        <dbReference type="Rhea" id="RHEA-COMP:13339"/>
        <dbReference type="Rhea" id="RHEA-COMP:13340"/>
        <dbReference type="ChEBI" id="CHEBI:15378"/>
        <dbReference type="ChEBI" id="CHEBI:29950"/>
        <dbReference type="ChEBI" id="CHEBI:30616"/>
        <dbReference type="ChEBI" id="CHEBI:33019"/>
        <dbReference type="ChEBI" id="CHEBI:33737"/>
        <dbReference type="ChEBI" id="CHEBI:33738"/>
        <dbReference type="ChEBI" id="CHEBI:61963"/>
        <dbReference type="ChEBI" id="CHEBI:65315"/>
        <dbReference type="ChEBI" id="CHEBI:136798"/>
        <dbReference type="ChEBI" id="CHEBI:456215"/>
        <dbReference type="EC" id="2.8.1.4"/>
    </reaction>
</comment>
<comment type="catalytic activity">
    <reaction evidence="1">
        <text>[ThiS sulfur-carrier protein]-C-terminal Gly-Gly-AMP + S-sulfanyl-L-cysteinyl-[cysteine desulfurase] + AH2 = [ThiS sulfur-carrier protein]-C-terminal-Gly-aminoethanethioate + L-cysteinyl-[cysteine desulfurase] + A + AMP + 2 H(+)</text>
        <dbReference type="Rhea" id="RHEA:43340"/>
        <dbReference type="Rhea" id="RHEA-COMP:12157"/>
        <dbReference type="Rhea" id="RHEA-COMP:12158"/>
        <dbReference type="Rhea" id="RHEA-COMP:12910"/>
        <dbReference type="Rhea" id="RHEA-COMP:19908"/>
        <dbReference type="ChEBI" id="CHEBI:13193"/>
        <dbReference type="ChEBI" id="CHEBI:15378"/>
        <dbReference type="ChEBI" id="CHEBI:17499"/>
        <dbReference type="ChEBI" id="CHEBI:29950"/>
        <dbReference type="ChEBI" id="CHEBI:61963"/>
        <dbReference type="ChEBI" id="CHEBI:90618"/>
        <dbReference type="ChEBI" id="CHEBI:232372"/>
        <dbReference type="ChEBI" id="CHEBI:456215"/>
    </reaction>
</comment>
<comment type="pathway">
    <text evidence="1">Cofactor biosynthesis; thiamine diphosphate biosynthesis.</text>
</comment>
<comment type="subcellular location">
    <subcellularLocation>
        <location evidence="1">Cytoplasm</location>
    </subcellularLocation>
</comment>
<comment type="similarity">
    <text evidence="1">Belongs to the ThiI family.</text>
</comment>
<organism>
    <name type="scientific">Mycoplasma pneumoniae (strain ATCC 29342 / M129 / Subtype 1)</name>
    <name type="common">Mycoplasmoides pneumoniae</name>
    <dbReference type="NCBI Taxonomy" id="272634"/>
    <lineage>
        <taxon>Bacteria</taxon>
        <taxon>Bacillati</taxon>
        <taxon>Mycoplasmatota</taxon>
        <taxon>Mycoplasmoidales</taxon>
        <taxon>Mycoplasmoidaceae</taxon>
        <taxon>Mycoplasmoides</taxon>
    </lineage>
</organism>
<sequence length="387" mass="43341">MGLHNEPNTILICRYGELVLKGKNRLQFVKQLKKNVKQAFKKLSITNPVDYQFDMLVVGEVISTQRSLLKNLFTRLPGLSVCLFALQIPHDEAQLLALLQQVVQSHPSFKIEVRRRDKLFACNSSAFKKYLALQLWEKYQLKGKLVDPAITVHVEVTKEHFLIISESFNGIGGLPVFTSGTALALLSGGIDSPVAASLVLQRGFNVDFITFINEPGHNAATIGKIQRLANLVSLNQTLCTGRLFVFDFTDLQKELSHISLEGYRIVLMRRCFYKIASLFKYDCLITGEALGQVASQTIDNLKVIQAVVPNTFVIRPLIGLSKDKIIEWAKALGTFETSIEHHMDTCTVFAPKKPTTKAKLAIVEKLESELLFVRELIEAGVKKLQND</sequence>